<evidence type="ECO:0000255" key="1">
    <source>
        <dbReference type="HAMAP-Rule" id="MF_00149"/>
    </source>
</evidence>
<reference key="1">
    <citation type="submission" date="2008-10" db="EMBL/GenBank/DDBJ databases">
        <title>Genome sequence of Bacillus cereus G9842.</title>
        <authorList>
            <person name="Dodson R.J."/>
            <person name="Durkin A.S."/>
            <person name="Rosovitz M.J."/>
            <person name="Rasko D.A."/>
            <person name="Hoffmaster A."/>
            <person name="Ravel J."/>
            <person name="Sutton G."/>
        </authorList>
    </citation>
    <scope>NUCLEOTIDE SEQUENCE [LARGE SCALE GENOMIC DNA]</scope>
    <source>
        <strain>G9842</strain>
    </source>
</reference>
<accession>B7ITM0</accession>
<comment type="function">
    <text evidence="1">This protein is involved in the repair of mismatches in DNA. It is required for dam-dependent methyl-directed DNA mismatch repair. May act as a 'molecular matchmaker', a protein that promotes the formation of a stable complex between two or more DNA-binding proteins in an ATP-dependent manner without itself being part of a final effector complex.</text>
</comment>
<comment type="similarity">
    <text evidence="1">Belongs to the DNA mismatch repair MutL/HexB family.</text>
</comment>
<feature type="chain" id="PRO_1000192160" description="DNA mismatch repair protein MutL">
    <location>
        <begin position="1"/>
        <end position="647"/>
    </location>
</feature>
<keyword id="KW-0227">DNA damage</keyword>
<keyword id="KW-0234">DNA repair</keyword>
<name>MUTL_BACC2</name>
<dbReference type="EMBL" id="CP001186">
    <property type="protein sequence ID" value="ACK94180.1"/>
    <property type="molecule type" value="Genomic_DNA"/>
</dbReference>
<dbReference type="RefSeq" id="WP_000516486.1">
    <property type="nucleotide sequence ID" value="NC_011772.1"/>
</dbReference>
<dbReference type="SMR" id="B7ITM0"/>
<dbReference type="KEGG" id="bcg:BCG9842_B1432"/>
<dbReference type="HOGENOM" id="CLU_004131_4_1_9"/>
<dbReference type="Proteomes" id="UP000006744">
    <property type="component" value="Chromosome"/>
</dbReference>
<dbReference type="GO" id="GO:0032300">
    <property type="term" value="C:mismatch repair complex"/>
    <property type="evidence" value="ECO:0007669"/>
    <property type="project" value="InterPro"/>
</dbReference>
<dbReference type="GO" id="GO:0005524">
    <property type="term" value="F:ATP binding"/>
    <property type="evidence" value="ECO:0007669"/>
    <property type="project" value="InterPro"/>
</dbReference>
<dbReference type="GO" id="GO:0016887">
    <property type="term" value="F:ATP hydrolysis activity"/>
    <property type="evidence" value="ECO:0007669"/>
    <property type="project" value="InterPro"/>
</dbReference>
<dbReference type="GO" id="GO:0140664">
    <property type="term" value="F:ATP-dependent DNA damage sensor activity"/>
    <property type="evidence" value="ECO:0007669"/>
    <property type="project" value="InterPro"/>
</dbReference>
<dbReference type="GO" id="GO:0030983">
    <property type="term" value="F:mismatched DNA binding"/>
    <property type="evidence" value="ECO:0007669"/>
    <property type="project" value="InterPro"/>
</dbReference>
<dbReference type="GO" id="GO:0006298">
    <property type="term" value="P:mismatch repair"/>
    <property type="evidence" value="ECO:0007669"/>
    <property type="project" value="UniProtKB-UniRule"/>
</dbReference>
<dbReference type="CDD" id="cd16926">
    <property type="entry name" value="HATPase_MutL-MLH-PMS-like"/>
    <property type="match status" value="1"/>
</dbReference>
<dbReference type="CDD" id="cd00782">
    <property type="entry name" value="MutL_Trans"/>
    <property type="match status" value="1"/>
</dbReference>
<dbReference type="FunFam" id="3.30.1370.100:FF:000004">
    <property type="entry name" value="DNA mismatch repair endonuclease MutL"/>
    <property type="match status" value="1"/>
</dbReference>
<dbReference type="FunFam" id="3.30.230.10:FF:000036">
    <property type="entry name" value="DNA mismatch repair endonuclease MutL"/>
    <property type="match status" value="1"/>
</dbReference>
<dbReference type="FunFam" id="3.30.565.10:FF:000003">
    <property type="entry name" value="DNA mismatch repair endonuclease MutL"/>
    <property type="match status" value="1"/>
</dbReference>
<dbReference type="Gene3D" id="3.30.230.10">
    <property type="match status" value="1"/>
</dbReference>
<dbReference type="Gene3D" id="3.30.565.10">
    <property type="entry name" value="Histidine kinase-like ATPase, C-terminal domain"/>
    <property type="match status" value="1"/>
</dbReference>
<dbReference type="Gene3D" id="3.30.1540.20">
    <property type="entry name" value="MutL, C-terminal domain, dimerisation subdomain"/>
    <property type="match status" value="1"/>
</dbReference>
<dbReference type="Gene3D" id="3.30.1370.100">
    <property type="entry name" value="MutL, C-terminal domain, regulatory subdomain"/>
    <property type="match status" value="1"/>
</dbReference>
<dbReference type="HAMAP" id="MF_00149">
    <property type="entry name" value="DNA_mis_repair"/>
    <property type="match status" value="1"/>
</dbReference>
<dbReference type="InterPro" id="IPR014762">
    <property type="entry name" value="DNA_mismatch_repair_CS"/>
</dbReference>
<dbReference type="InterPro" id="IPR020667">
    <property type="entry name" value="DNA_mismatch_repair_MutL"/>
</dbReference>
<dbReference type="InterPro" id="IPR013507">
    <property type="entry name" value="DNA_mismatch_S5_2-like"/>
</dbReference>
<dbReference type="InterPro" id="IPR036890">
    <property type="entry name" value="HATPase_C_sf"/>
</dbReference>
<dbReference type="InterPro" id="IPR002099">
    <property type="entry name" value="MutL/Mlh/PMS"/>
</dbReference>
<dbReference type="InterPro" id="IPR038973">
    <property type="entry name" value="MutL/Mlh/Pms-like"/>
</dbReference>
<dbReference type="InterPro" id="IPR014790">
    <property type="entry name" value="MutL_C"/>
</dbReference>
<dbReference type="InterPro" id="IPR042120">
    <property type="entry name" value="MutL_C_dimsub"/>
</dbReference>
<dbReference type="InterPro" id="IPR042121">
    <property type="entry name" value="MutL_C_regsub"/>
</dbReference>
<dbReference type="InterPro" id="IPR037198">
    <property type="entry name" value="MutL_C_sf"/>
</dbReference>
<dbReference type="InterPro" id="IPR020568">
    <property type="entry name" value="Ribosomal_Su5_D2-typ_SF"/>
</dbReference>
<dbReference type="InterPro" id="IPR014721">
    <property type="entry name" value="Ribsml_uS5_D2-typ_fold_subgr"/>
</dbReference>
<dbReference type="NCBIfam" id="TIGR00585">
    <property type="entry name" value="mutl"/>
    <property type="match status" value="1"/>
</dbReference>
<dbReference type="NCBIfam" id="NF000950">
    <property type="entry name" value="PRK00095.1-3"/>
    <property type="match status" value="1"/>
</dbReference>
<dbReference type="PANTHER" id="PTHR10073">
    <property type="entry name" value="DNA MISMATCH REPAIR PROTEIN MLH, PMS, MUTL"/>
    <property type="match status" value="1"/>
</dbReference>
<dbReference type="PANTHER" id="PTHR10073:SF12">
    <property type="entry name" value="DNA MISMATCH REPAIR PROTEIN MLH1"/>
    <property type="match status" value="1"/>
</dbReference>
<dbReference type="Pfam" id="PF01119">
    <property type="entry name" value="DNA_mis_repair"/>
    <property type="match status" value="1"/>
</dbReference>
<dbReference type="Pfam" id="PF13589">
    <property type="entry name" value="HATPase_c_3"/>
    <property type="match status" value="1"/>
</dbReference>
<dbReference type="Pfam" id="PF08676">
    <property type="entry name" value="MutL_C"/>
    <property type="match status" value="1"/>
</dbReference>
<dbReference type="SMART" id="SM01340">
    <property type="entry name" value="DNA_mis_repair"/>
    <property type="match status" value="1"/>
</dbReference>
<dbReference type="SMART" id="SM00853">
    <property type="entry name" value="MutL_C"/>
    <property type="match status" value="1"/>
</dbReference>
<dbReference type="SUPFAM" id="SSF55874">
    <property type="entry name" value="ATPase domain of HSP90 chaperone/DNA topoisomerase II/histidine kinase"/>
    <property type="match status" value="1"/>
</dbReference>
<dbReference type="SUPFAM" id="SSF118116">
    <property type="entry name" value="DNA mismatch repair protein MutL"/>
    <property type="match status" value="1"/>
</dbReference>
<dbReference type="SUPFAM" id="SSF54211">
    <property type="entry name" value="Ribosomal protein S5 domain 2-like"/>
    <property type="match status" value="1"/>
</dbReference>
<dbReference type="PROSITE" id="PS00058">
    <property type="entry name" value="DNA_MISMATCH_REPAIR_1"/>
    <property type="match status" value="1"/>
</dbReference>
<organism>
    <name type="scientific">Bacillus cereus (strain G9842)</name>
    <dbReference type="NCBI Taxonomy" id="405531"/>
    <lineage>
        <taxon>Bacteria</taxon>
        <taxon>Bacillati</taxon>
        <taxon>Bacillota</taxon>
        <taxon>Bacilli</taxon>
        <taxon>Bacillales</taxon>
        <taxon>Bacillaceae</taxon>
        <taxon>Bacillus</taxon>
        <taxon>Bacillus cereus group</taxon>
    </lineage>
</organism>
<gene>
    <name evidence="1" type="primary">mutL</name>
    <name type="ordered locus">BCG9842_B1432</name>
</gene>
<protein>
    <recommendedName>
        <fullName evidence="1">DNA mismatch repair protein MutL</fullName>
    </recommendedName>
</protein>
<sequence>MGKIRKLDDQLSNLIAAGEVVERPASVVKELVENSIDANSTSIEIHLEEAGLSKIRIIDNGDGIAEEDCIVAFERHATSKIKDENDLFRIRTLGFRGEALPSIASVSELELITSTGDAPGTHLIIKGGDIIKQEKTASRKGTDITVQNLFFNTPARLKYMKTIHTELGNITDIVYRIAMSHPEVSLKLFHNEKKLLHTSGNGDVRQVLASIYSIQVAKKLVPIEAESLDFTITGYVTLPEVTRASRNYMSTIVNGRYVRNFVLMKAIQQGYHTLLPVGRYPIGFLSIEMDPMLVDVNVHPAKLEVRFSKEQELLKLIEETLQAAFKKIQLIPDAGVTTKKKEKDESVQEQFQFEHAKPKEPSMPDIVLPTGMDEKQEEPLPVKQPAQLWQPPKQEWQPPQSLVREEQSWQPSTRPIMEEPIREEKSWDSNEEDFELEELEEEVQEIKEIEMNGNDLPPLYPIGQMHGTYIFAQNDKGLYMIDQHAAQERINYEYFRDKVGRVAQEVQELLVPYRIDLSLTEFLRVEEQLEELKKVGLFLEQFGHQSFIVRSHPTWFPKGQETEIIDEMMEQVVKLKKVDIKKLREEAAIMMSCKASIKANQYLTNDQIFALLEELRTTTNPYTCPHGRPILVHHSTYELEKMFKRVM</sequence>
<proteinExistence type="inferred from homology"/>